<organism>
    <name type="scientific">Oryza sativa subsp. japonica</name>
    <name type="common">Rice</name>
    <dbReference type="NCBI Taxonomy" id="39947"/>
    <lineage>
        <taxon>Eukaryota</taxon>
        <taxon>Viridiplantae</taxon>
        <taxon>Streptophyta</taxon>
        <taxon>Embryophyta</taxon>
        <taxon>Tracheophyta</taxon>
        <taxon>Spermatophyta</taxon>
        <taxon>Magnoliopsida</taxon>
        <taxon>Liliopsida</taxon>
        <taxon>Poales</taxon>
        <taxon>Poaceae</taxon>
        <taxon>BOP clade</taxon>
        <taxon>Oryzoideae</taxon>
        <taxon>Oryzeae</taxon>
        <taxon>Oryzinae</taxon>
        <taxon>Oryza</taxon>
        <taxon>Oryza sativa</taxon>
    </lineage>
</organism>
<gene>
    <name type="primary">PP2A1</name>
    <name type="ordered locus">Os06g0574500</name>
    <name type="ordered locus">LOC_Os06g37660</name>
    <name type="ORF">OsJ_020918</name>
    <name type="ORF">OSJNBa0006A22.44</name>
</gene>
<keyword id="KW-0963">Cytoplasm</keyword>
<keyword id="KW-0378">Hydrolase</keyword>
<keyword id="KW-0464">Manganese</keyword>
<keyword id="KW-0479">Metal-binding</keyword>
<keyword id="KW-0904">Protein phosphatase</keyword>
<keyword id="KW-1185">Reference proteome</keyword>
<feature type="chain" id="PRO_0000058861" description="Serine/threonine-protein phosphatase PP2A-1 catalytic subunit">
    <location>
        <begin position="1"/>
        <end position="306"/>
    </location>
</feature>
<feature type="active site" description="Proton donor" evidence="1">
    <location>
        <position position="115"/>
    </location>
</feature>
<feature type="binding site" evidence="1">
    <location>
        <position position="54"/>
    </location>
    <ligand>
        <name>Mn(2+)</name>
        <dbReference type="ChEBI" id="CHEBI:29035"/>
        <label>1</label>
    </ligand>
</feature>
<feature type="binding site" evidence="1">
    <location>
        <position position="56"/>
    </location>
    <ligand>
        <name>Mn(2+)</name>
        <dbReference type="ChEBI" id="CHEBI:29035"/>
        <label>1</label>
    </ligand>
</feature>
<feature type="binding site" evidence="1">
    <location>
        <position position="82"/>
    </location>
    <ligand>
        <name>Mn(2+)</name>
        <dbReference type="ChEBI" id="CHEBI:29035"/>
        <label>1</label>
    </ligand>
</feature>
<feature type="binding site" evidence="1">
    <location>
        <position position="82"/>
    </location>
    <ligand>
        <name>Mn(2+)</name>
        <dbReference type="ChEBI" id="CHEBI:29035"/>
        <label>2</label>
    </ligand>
</feature>
<feature type="binding site" evidence="1">
    <location>
        <position position="114"/>
    </location>
    <ligand>
        <name>Mn(2+)</name>
        <dbReference type="ChEBI" id="CHEBI:29035"/>
        <label>2</label>
    </ligand>
</feature>
<feature type="binding site" evidence="1">
    <location>
        <position position="164"/>
    </location>
    <ligand>
        <name>Mn(2+)</name>
        <dbReference type="ChEBI" id="CHEBI:29035"/>
        <label>2</label>
    </ligand>
</feature>
<feature type="binding site" evidence="1">
    <location>
        <position position="238"/>
    </location>
    <ligand>
        <name>Mn(2+)</name>
        <dbReference type="ChEBI" id="CHEBI:29035"/>
        <label>2</label>
    </ligand>
</feature>
<accession>Q0DBD3</accession>
<accession>A0A0P0WY45</accession>
<accession>Q42981</accession>
<accession>Q5Z7K2</accession>
<accession>Q9ZSS3</accession>
<protein>
    <recommendedName>
        <fullName>Serine/threonine-protein phosphatase PP2A-1 catalytic subunit</fullName>
        <ecNumber>3.1.3.16</ecNumber>
    </recommendedName>
</protein>
<evidence type="ECO:0000250" key="1"/>
<evidence type="ECO:0000305" key="2"/>
<sequence length="306" mass="35114">MPSHADLDRQISQLRECKFLGEAEVRALCEQAKAILMEEWNVQPVRCPVTVCGDIHGQFYDLIELFRIGGDSPDTNYLFMGDYVDRGYYSVETVTLLVALKVRYRDRITILRGNHESRQITQVYGFYDECLRKYGNANVWKYFTDLFDYLPLTALVENQVFCLHGGLSPSLDTLDNIRALDRIQEVPHEGPMCDLLWSDPDDRCGWGISPRGAGYTFGQDIAQQFNHTNGLTLISRAHQLVMEGFNWCQDKNVVTVFSAPNYCYRCGNMAAILEIGENMDQNFLQFDPAPRQIEPDTTRKTPDYFL</sequence>
<proteinExistence type="evidence at transcript level"/>
<reference key="1">
    <citation type="journal article" date="2005" name="Nature">
        <title>The map-based sequence of the rice genome.</title>
        <authorList>
            <consortium name="International rice genome sequencing project (IRGSP)"/>
        </authorList>
    </citation>
    <scope>NUCLEOTIDE SEQUENCE [LARGE SCALE GENOMIC DNA]</scope>
    <source>
        <strain>cv. Nipponbare</strain>
    </source>
</reference>
<reference key="2">
    <citation type="journal article" date="2008" name="Nucleic Acids Res.">
        <title>The rice annotation project database (RAP-DB): 2008 update.</title>
        <authorList>
            <consortium name="The rice annotation project (RAP)"/>
        </authorList>
    </citation>
    <scope>GENOME REANNOTATION</scope>
    <source>
        <strain>cv. Nipponbare</strain>
    </source>
</reference>
<reference key="3">
    <citation type="journal article" date="2013" name="Rice">
        <title>Improvement of the Oryza sativa Nipponbare reference genome using next generation sequence and optical map data.</title>
        <authorList>
            <person name="Kawahara Y."/>
            <person name="de la Bastide M."/>
            <person name="Hamilton J.P."/>
            <person name="Kanamori H."/>
            <person name="McCombie W.R."/>
            <person name="Ouyang S."/>
            <person name="Schwartz D.C."/>
            <person name="Tanaka T."/>
            <person name="Wu J."/>
            <person name="Zhou S."/>
            <person name="Childs K.L."/>
            <person name="Davidson R.M."/>
            <person name="Lin H."/>
            <person name="Quesada-Ocampo L."/>
            <person name="Vaillancourt B."/>
            <person name="Sakai H."/>
            <person name="Lee S.S."/>
            <person name="Kim J."/>
            <person name="Numa H."/>
            <person name="Itoh T."/>
            <person name="Buell C.R."/>
            <person name="Matsumoto T."/>
        </authorList>
    </citation>
    <scope>GENOME REANNOTATION</scope>
    <source>
        <strain>cv. Nipponbare</strain>
    </source>
</reference>
<reference key="4">
    <citation type="journal article" date="2005" name="PLoS Biol.">
        <title>The genomes of Oryza sativa: a history of duplications.</title>
        <authorList>
            <person name="Yu J."/>
            <person name="Wang J."/>
            <person name="Lin W."/>
            <person name="Li S."/>
            <person name="Li H."/>
            <person name="Zhou J."/>
            <person name="Ni P."/>
            <person name="Dong W."/>
            <person name="Hu S."/>
            <person name="Zeng C."/>
            <person name="Zhang J."/>
            <person name="Zhang Y."/>
            <person name="Li R."/>
            <person name="Xu Z."/>
            <person name="Li S."/>
            <person name="Li X."/>
            <person name="Zheng H."/>
            <person name="Cong L."/>
            <person name="Lin L."/>
            <person name="Yin J."/>
            <person name="Geng J."/>
            <person name="Li G."/>
            <person name="Shi J."/>
            <person name="Liu J."/>
            <person name="Lv H."/>
            <person name="Li J."/>
            <person name="Wang J."/>
            <person name="Deng Y."/>
            <person name="Ran L."/>
            <person name="Shi X."/>
            <person name="Wang X."/>
            <person name="Wu Q."/>
            <person name="Li C."/>
            <person name="Ren X."/>
            <person name="Wang J."/>
            <person name="Wang X."/>
            <person name="Li D."/>
            <person name="Liu D."/>
            <person name="Zhang X."/>
            <person name="Ji Z."/>
            <person name="Zhao W."/>
            <person name="Sun Y."/>
            <person name="Zhang Z."/>
            <person name="Bao J."/>
            <person name="Han Y."/>
            <person name="Dong L."/>
            <person name="Ji J."/>
            <person name="Chen P."/>
            <person name="Wu S."/>
            <person name="Liu J."/>
            <person name="Xiao Y."/>
            <person name="Bu D."/>
            <person name="Tan J."/>
            <person name="Yang L."/>
            <person name="Ye C."/>
            <person name="Zhang J."/>
            <person name="Xu J."/>
            <person name="Zhou Y."/>
            <person name="Yu Y."/>
            <person name="Zhang B."/>
            <person name="Zhuang S."/>
            <person name="Wei H."/>
            <person name="Liu B."/>
            <person name="Lei M."/>
            <person name="Yu H."/>
            <person name="Li Y."/>
            <person name="Xu H."/>
            <person name="Wei S."/>
            <person name="He X."/>
            <person name="Fang L."/>
            <person name="Zhang Z."/>
            <person name="Zhang Y."/>
            <person name="Huang X."/>
            <person name="Su Z."/>
            <person name="Tong W."/>
            <person name="Li J."/>
            <person name="Tong Z."/>
            <person name="Li S."/>
            <person name="Ye J."/>
            <person name="Wang L."/>
            <person name="Fang L."/>
            <person name="Lei T."/>
            <person name="Chen C.-S."/>
            <person name="Chen H.-C."/>
            <person name="Xu Z."/>
            <person name="Li H."/>
            <person name="Huang H."/>
            <person name="Zhang F."/>
            <person name="Xu H."/>
            <person name="Li N."/>
            <person name="Zhao C."/>
            <person name="Li S."/>
            <person name="Dong L."/>
            <person name="Huang Y."/>
            <person name="Li L."/>
            <person name="Xi Y."/>
            <person name="Qi Q."/>
            <person name="Li W."/>
            <person name="Zhang B."/>
            <person name="Hu W."/>
            <person name="Zhang Y."/>
            <person name="Tian X."/>
            <person name="Jiao Y."/>
            <person name="Liang X."/>
            <person name="Jin J."/>
            <person name="Gao L."/>
            <person name="Zheng W."/>
            <person name="Hao B."/>
            <person name="Liu S.-M."/>
            <person name="Wang W."/>
            <person name="Yuan L."/>
            <person name="Cao M."/>
            <person name="McDermott J."/>
            <person name="Samudrala R."/>
            <person name="Wang J."/>
            <person name="Wong G.K.-S."/>
            <person name="Yang H."/>
        </authorList>
    </citation>
    <scope>NUCLEOTIDE SEQUENCE [LARGE SCALE GENOMIC DNA]</scope>
    <source>
        <strain>cv. Nipponbare</strain>
    </source>
</reference>
<reference key="5">
    <citation type="journal article" date="2003" name="Science">
        <title>Collection, mapping, and annotation of over 28,000 cDNA clones from japonica rice.</title>
        <authorList>
            <consortium name="The rice full-length cDNA consortium"/>
        </authorList>
    </citation>
    <scope>NUCLEOTIDE SEQUENCE [LARGE SCALE MRNA]</scope>
    <source>
        <strain>cv. Nipponbare</strain>
    </source>
</reference>
<name>PP2A1_ORYSJ</name>
<comment type="catalytic activity">
    <reaction>
        <text>O-phospho-L-seryl-[protein] + H2O = L-seryl-[protein] + phosphate</text>
        <dbReference type="Rhea" id="RHEA:20629"/>
        <dbReference type="Rhea" id="RHEA-COMP:9863"/>
        <dbReference type="Rhea" id="RHEA-COMP:11604"/>
        <dbReference type="ChEBI" id="CHEBI:15377"/>
        <dbReference type="ChEBI" id="CHEBI:29999"/>
        <dbReference type="ChEBI" id="CHEBI:43474"/>
        <dbReference type="ChEBI" id="CHEBI:83421"/>
        <dbReference type="EC" id="3.1.3.16"/>
    </reaction>
</comment>
<comment type="catalytic activity">
    <reaction>
        <text>O-phospho-L-threonyl-[protein] + H2O = L-threonyl-[protein] + phosphate</text>
        <dbReference type="Rhea" id="RHEA:47004"/>
        <dbReference type="Rhea" id="RHEA-COMP:11060"/>
        <dbReference type="Rhea" id="RHEA-COMP:11605"/>
        <dbReference type="ChEBI" id="CHEBI:15377"/>
        <dbReference type="ChEBI" id="CHEBI:30013"/>
        <dbReference type="ChEBI" id="CHEBI:43474"/>
        <dbReference type="ChEBI" id="CHEBI:61977"/>
        <dbReference type="EC" id="3.1.3.16"/>
    </reaction>
</comment>
<comment type="cofactor">
    <cofactor evidence="1">
        <name>Mn(2+)</name>
        <dbReference type="ChEBI" id="CHEBI:29035"/>
    </cofactor>
    <text evidence="1">Binds 2 manganese ions per subunit.</text>
</comment>
<comment type="subcellular location">
    <subcellularLocation>
        <location evidence="1">Cytoplasm</location>
    </subcellularLocation>
</comment>
<comment type="similarity">
    <text evidence="2">Belongs to the PPP phosphatase family. PP-2A subfamily.</text>
</comment>
<comment type="sequence caution" evidence="2">
    <conflict type="frameshift">
        <sequence resource="EMBL" id="AK071838"/>
    </conflict>
</comment>
<dbReference type="EC" id="3.1.3.16"/>
<dbReference type="EMBL" id="AP004729">
    <property type="protein sequence ID" value="BAD61854.1"/>
    <property type="molecule type" value="Genomic_DNA"/>
</dbReference>
<dbReference type="EMBL" id="AP008212">
    <property type="protein sequence ID" value="BAF19840.1"/>
    <property type="molecule type" value="Genomic_DNA"/>
</dbReference>
<dbReference type="EMBL" id="AP014962">
    <property type="protein sequence ID" value="BAS98342.1"/>
    <property type="molecule type" value="Genomic_DNA"/>
</dbReference>
<dbReference type="EMBL" id="CM000143">
    <property type="protein sequence ID" value="EAZ37435.1"/>
    <property type="molecule type" value="Genomic_DNA"/>
</dbReference>
<dbReference type="EMBL" id="AK071838">
    <property type="status" value="NOT_ANNOTATED_CDS"/>
    <property type="molecule type" value="mRNA"/>
</dbReference>
<dbReference type="RefSeq" id="XP_015643067.1">
    <property type="nucleotide sequence ID" value="XM_015787581.1"/>
</dbReference>
<dbReference type="SMR" id="Q0DBD3"/>
<dbReference type="FunCoup" id="Q0DBD3">
    <property type="interactions" value="2385"/>
</dbReference>
<dbReference type="IntAct" id="Q0DBD3">
    <property type="interactions" value="1"/>
</dbReference>
<dbReference type="STRING" id="39947.Q0DBD3"/>
<dbReference type="PaxDb" id="39947-Q0DBD3"/>
<dbReference type="EnsemblPlants" id="Os06t0574500-01">
    <property type="protein sequence ID" value="Os06t0574500-01"/>
    <property type="gene ID" value="Os06g0574500"/>
</dbReference>
<dbReference type="Gramene" id="Os06t0574500-01">
    <property type="protein sequence ID" value="Os06t0574500-01"/>
    <property type="gene ID" value="Os06g0574500"/>
</dbReference>
<dbReference type="KEGG" id="dosa:Os06g0574500"/>
<dbReference type="eggNOG" id="KOG0371">
    <property type="taxonomic scope" value="Eukaryota"/>
</dbReference>
<dbReference type="HOGENOM" id="CLU_004962_8_1_1"/>
<dbReference type="InParanoid" id="Q0DBD3"/>
<dbReference type="OMA" id="GENMDQS"/>
<dbReference type="OrthoDB" id="1930084at2759"/>
<dbReference type="PlantReactome" id="R-OSA-5632095">
    <property type="pathway name" value="Brassinosteroid signaling"/>
</dbReference>
<dbReference type="Proteomes" id="UP000000763">
    <property type="component" value="Chromosome 6"/>
</dbReference>
<dbReference type="Proteomes" id="UP000007752">
    <property type="component" value="Chromosome 6"/>
</dbReference>
<dbReference type="Proteomes" id="UP000059680">
    <property type="component" value="Chromosome 6"/>
</dbReference>
<dbReference type="GO" id="GO:0005829">
    <property type="term" value="C:cytosol"/>
    <property type="evidence" value="ECO:0000318"/>
    <property type="project" value="GO_Central"/>
</dbReference>
<dbReference type="GO" id="GO:0005634">
    <property type="term" value="C:nucleus"/>
    <property type="evidence" value="ECO:0000318"/>
    <property type="project" value="GO_Central"/>
</dbReference>
<dbReference type="GO" id="GO:0046872">
    <property type="term" value="F:metal ion binding"/>
    <property type="evidence" value="ECO:0007669"/>
    <property type="project" value="UniProtKB-KW"/>
</dbReference>
<dbReference type="GO" id="GO:0004722">
    <property type="term" value="F:protein serine/threonine phosphatase activity"/>
    <property type="evidence" value="ECO:0000318"/>
    <property type="project" value="GO_Central"/>
</dbReference>
<dbReference type="GO" id="GO:0000278">
    <property type="term" value="P:mitotic cell cycle"/>
    <property type="evidence" value="ECO:0000318"/>
    <property type="project" value="GO_Central"/>
</dbReference>
<dbReference type="CDD" id="cd07415">
    <property type="entry name" value="MPP_PP2A_PP4_PP6"/>
    <property type="match status" value="1"/>
</dbReference>
<dbReference type="FunFam" id="3.60.21.10:FF:000003">
    <property type="entry name" value="Serine/threonine-protein phosphatase"/>
    <property type="match status" value="1"/>
</dbReference>
<dbReference type="Gene3D" id="3.60.21.10">
    <property type="match status" value="1"/>
</dbReference>
<dbReference type="InterPro" id="IPR004843">
    <property type="entry name" value="Calcineurin-like_PHP_ApaH"/>
</dbReference>
<dbReference type="InterPro" id="IPR029052">
    <property type="entry name" value="Metallo-depent_PP-like"/>
</dbReference>
<dbReference type="InterPro" id="IPR047129">
    <property type="entry name" value="PPA2-like"/>
</dbReference>
<dbReference type="InterPro" id="IPR006186">
    <property type="entry name" value="Ser/Thr-sp_prot-phosphatase"/>
</dbReference>
<dbReference type="PANTHER" id="PTHR45619">
    <property type="entry name" value="SERINE/THREONINE-PROTEIN PHOSPHATASE PP2A-RELATED"/>
    <property type="match status" value="1"/>
</dbReference>
<dbReference type="Pfam" id="PF00149">
    <property type="entry name" value="Metallophos"/>
    <property type="match status" value="1"/>
</dbReference>
<dbReference type="PRINTS" id="PR00114">
    <property type="entry name" value="STPHPHTASE"/>
</dbReference>
<dbReference type="SMART" id="SM00156">
    <property type="entry name" value="PP2Ac"/>
    <property type="match status" value="1"/>
</dbReference>
<dbReference type="SUPFAM" id="SSF56300">
    <property type="entry name" value="Metallo-dependent phosphatases"/>
    <property type="match status" value="1"/>
</dbReference>
<dbReference type="PROSITE" id="PS00125">
    <property type="entry name" value="SER_THR_PHOSPHATASE"/>
    <property type="match status" value="1"/>
</dbReference>